<gene>
    <name type="ORF">39212</name>
</gene>
<feature type="chain" id="PRO_0000364234" description="Eukaryotic translation initiation factor 3 subunit L">
    <location>
        <begin position="1"/>
        <end position="512"/>
    </location>
</feature>
<feature type="domain" description="PCI" evidence="2">
    <location>
        <begin position="291"/>
        <end position="477"/>
    </location>
</feature>
<comment type="function">
    <text evidence="1">Component of the eukaryotic translation initiation factor 3 (eIF-3) complex, which is involved in protein synthesis of a specialized repertoire of mRNAs and, together with other initiation factors, stimulates binding of mRNA and methionyl-tRNAi to the 40S ribosome. The eIF-3 complex specifically targets and initiates translation of a subset of mRNAs involved in cell proliferation.</text>
</comment>
<comment type="subunit">
    <text evidence="1">Component of the eukaryotic translation initiation factor 3 (eIF-3) complex.</text>
</comment>
<comment type="subcellular location">
    <subcellularLocation>
        <location evidence="1">Cytoplasm</location>
    </subcellularLocation>
</comment>
<comment type="similarity">
    <text evidence="1">Belongs to the eIF-3 subunit L family.</text>
</comment>
<protein>
    <recommendedName>
        <fullName evidence="1">Eukaryotic translation initiation factor 3 subunit L</fullName>
        <shortName evidence="1">eIF3l</shortName>
    </recommendedName>
</protein>
<accession>A9VCY6</accession>
<sequence length="512" mass="59924">MEQETFEEQEITVADINANVPQEVQNYLRSFNKAIQEKSLKEIEEHYEYKWRRTTDQYFKDSRWPEPVYIQAMFEQEGQEDSYFVSLYPELYYRDVYYRSSNTNIEITVEDRHASYDHYIELINMFVEPDAPLDLELPNKWLWDMIDEFLYQFQDFVIFRSRVDDAKTESDYQEIAERPNAWNVTIVLNALHSLILKSEINEQLEAYRSGQNPTEMAGAFGKSSLYKMLGCFSLVGLVRLQCHLGDYRQALQIMKNVDLDRRFIFSLVPACNVSLHYHLGFCYLMLRRYQDAFRLFESILIQMASHRGPGHYDGGRKRDTIVCLLALAYSLLPQRLERSVEHLMNEKEGENIRKIQSGEGADEAINHLLLRGAPRFLCPFLADPQQPPEEDVLKAESERQLELFKQEAKQLILLGQIRSYLKLYTRMKLEKLAKFLELTVPQLRSMLHSFKHKMSQIVHTPGGEPLAGERQFTDSVDFYVDGDEICIATMTVKKSYGDDFLTASLKMVTSNR</sequence>
<evidence type="ECO:0000255" key="1">
    <source>
        <dbReference type="HAMAP-Rule" id="MF_03011"/>
    </source>
</evidence>
<evidence type="ECO:0000255" key="2">
    <source>
        <dbReference type="PROSITE-ProRule" id="PRU01185"/>
    </source>
</evidence>
<reference key="1">
    <citation type="journal article" date="2008" name="Nature">
        <title>The genome of the choanoflagellate Monosiga brevicollis and the origin of metazoans.</title>
        <authorList>
            <consortium name="JGI Sequencing"/>
            <person name="King N."/>
            <person name="Westbrook M.J."/>
            <person name="Young S.L."/>
            <person name="Kuo A."/>
            <person name="Abedin M."/>
            <person name="Chapman J."/>
            <person name="Fairclough S."/>
            <person name="Hellsten U."/>
            <person name="Isogai Y."/>
            <person name="Letunic I."/>
            <person name="Marr M."/>
            <person name="Pincus D."/>
            <person name="Putnam N."/>
            <person name="Rokas A."/>
            <person name="Wright K.J."/>
            <person name="Zuzow R."/>
            <person name="Dirks W."/>
            <person name="Good M."/>
            <person name="Goodstein D."/>
            <person name="Lemons D."/>
            <person name="Li W."/>
            <person name="Lyons J.B."/>
            <person name="Morris A."/>
            <person name="Nichols S."/>
            <person name="Richter D.J."/>
            <person name="Salamov A."/>
            <person name="Bork P."/>
            <person name="Lim W.A."/>
            <person name="Manning G."/>
            <person name="Miller W.T."/>
            <person name="McGinnis W."/>
            <person name="Shapiro H."/>
            <person name="Tjian R."/>
            <person name="Grigoriev I.V."/>
            <person name="Rokhsar D."/>
        </authorList>
    </citation>
    <scope>NUCLEOTIDE SEQUENCE [LARGE SCALE GENOMIC DNA]</scope>
    <source>
        <strain>MX1 / ATCC 50154</strain>
    </source>
</reference>
<dbReference type="EMBL" id="CH991584">
    <property type="protein sequence ID" value="EDQ84584.1"/>
    <property type="molecule type" value="Genomic_DNA"/>
</dbReference>
<dbReference type="RefSeq" id="XP_001750611.1">
    <property type="nucleotide sequence ID" value="XM_001750559.1"/>
</dbReference>
<dbReference type="SMR" id="A9VCY6"/>
<dbReference type="FunCoup" id="A9VCY6">
    <property type="interactions" value="1146"/>
</dbReference>
<dbReference type="STRING" id="81824.A9VCY6"/>
<dbReference type="EnsemblProtists" id="EDQ84584">
    <property type="protein sequence ID" value="EDQ84584"/>
    <property type="gene ID" value="MONBRDRAFT_39212"/>
</dbReference>
<dbReference type="KEGG" id="mbr:MONBRDRAFT_39212"/>
<dbReference type="eggNOG" id="KOG3677">
    <property type="taxonomic scope" value="Eukaryota"/>
</dbReference>
<dbReference type="InParanoid" id="A9VCY6"/>
<dbReference type="OMA" id="AGWFIRN"/>
<dbReference type="Proteomes" id="UP000001357">
    <property type="component" value="Unassembled WGS sequence"/>
</dbReference>
<dbReference type="GO" id="GO:0016282">
    <property type="term" value="C:eukaryotic 43S preinitiation complex"/>
    <property type="evidence" value="ECO:0007669"/>
    <property type="project" value="UniProtKB-UniRule"/>
</dbReference>
<dbReference type="GO" id="GO:0033290">
    <property type="term" value="C:eukaryotic 48S preinitiation complex"/>
    <property type="evidence" value="ECO:0007669"/>
    <property type="project" value="UniProtKB-UniRule"/>
</dbReference>
<dbReference type="GO" id="GO:0005852">
    <property type="term" value="C:eukaryotic translation initiation factor 3 complex"/>
    <property type="evidence" value="ECO:0000318"/>
    <property type="project" value="GO_Central"/>
</dbReference>
<dbReference type="GO" id="GO:0003743">
    <property type="term" value="F:translation initiation factor activity"/>
    <property type="evidence" value="ECO:0007669"/>
    <property type="project" value="UniProtKB-UniRule"/>
</dbReference>
<dbReference type="GO" id="GO:0001732">
    <property type="term" value="P:formation of cytoplasmic translation initiation complex"/>
    <property type="evidence" value="ECO:0007669"/>
    <property type="project" value="UniProtKB-UniRule"/>
</dbReference>
<dbReference type="GO" id="GO:0006413">
    <property type="term" value="P:translational initiation"/>
    <property type="evidence" value="ECO:0000318"/>
    <property type="project" value="GO_Central"/>
</dbReference>
<dbReference type="HAMAP" id="MF_03011">
    <property type="entry name" value="eIF3l"/>
    <property type="match status" value="1"/>
</dbReference>
<dbReference type="InterPro" id="IPR019382">
    <property type="entry name" value="eIF3l"/>
</dbReference>
<dbReference type="InterPro" id="IPR000717">
    <property type="entry name" value="PCI_dom"/>
</dbReference>
<dbReference type="PANTHER" id="PTHR13242">
    <property type="entry name" value="EUKARYOTIC TRANSLATION INITIATION FACTOR 3"/>
    <property type="match status" value="1"/>
</dbReference>
<dbReference type="PANTHER" id="PTHR13242:SF0">
    <property type="entry name" value="EUKARYOTIC TRANSLATION INITIATION FACTOR 3 SUBUNIT L"/>
    <property type="match status" value="1"/>
</dbReference>
<dbReference type="Pfam" id="PF10255">
    <property type="entry name" value="Paf67"/>
    <property type="match status" value="1"/>
</dbReference>
<dbReference type="PROSITE" id="PS50250">
    <property type="entry name" value="PCI"/>
    <property type="match status" value="1"/>
</dbReference>
<keyword id="KW-0963">Cytoplasm</keyword>
<keyword id="KW-0396">Initiation factor</keyword>
<keyword id="KW-0648">Protein biosynthesis</keyword>
<keyword id="KW-1185">Reference proteome</keyword>
<proteinExistence type="inferred from homology"/>
<name>EIF3L_MONBE</name>
<organism>
    <name type="scientific">Monosiga brevicollis</name>
    <name type="common">Choanoflagellate</name>
    <dbReference type="NCBI Taxonomy" id="81824"/>
    <lineage>
        <taxon>Eukaryota</taxon>
        <taxon>Choanoflagellata</taxon>
        <taxon>Craspedida</taxon>
        <taxon>Salpingoecidae</taxon>
        <taxon>Monosiga</taxon>
    </lineage>
</organism>